<sequence length="181" mass="20435">MQAATLSFHPSAPPPQTSACHFSSKQPNQLKYSLFSYTCPILKRSLLSTQTLSRKSICKPPAVATGKYVREDYLVKKVSAKDIQELIKGERNVPLIIDFYATWCGPCILMAQELEMLAVEYESNALIVKVDADDEYEFARDMQVRGLPTLYFISPDPNKDAIRTEGLIPIQMMRDIINNDL</sequence>
<proteinExistence type="evidence at transcript level"/>
<accession>Q6JE38</accession>
<gene>
    <name evidence="6" type="primary">CITRX1</name>
</gene>
<protein>
    <recommendedName>
        <fullName evidence="7">Thioredoxin-like protein CITRX1, chloroplastic</fullName>
        <ecNumber evidence="7">1.8.-.-</ecNumber>
    </recommendedName>
    <alternativeName>
        <fullName evidence="6">Cf-9-interacting thioredoxin 1</fullName>
        <shortName evidence="6">NbCiTrx1</shortName>
    </alternativeName>
</protein>
<evidence type="ECO:0000250" key="1">
    <source>
        <dbReference type="UniProtKB" id="P10599"/>
    </source>
</evidence>
<evidence type="ECO:0000250" key="2">
    <source>
        <dbReference type="UniProtKB" id="Q9M7X9"/>
    </source>
</evidence>
<evidence type="ECO:0000255" key="3"/>
<evidence type="ECO:0000255" key="4">
    <source>
        <dbReference type="PROSITE-ProRule" id="PRU00691"/>
    </source>
</evidence>
<evidence type="ECO:0000256" key="5">
    <source>
        <dbReference type="SAM" id="MobiDB-lite"/>
    </source>
</evidence>
<evidence type="ECO:0000303" key="6">
    <source>
    </source>
</evidence>
<evidence type="ECO:0000305" key="7"/>
<evidence type="ECO:0000305" key="8">
    <source>
    </source>
</evidence>
<organism>
    <name type="scientific">Nicotiana benthamiana</name>
    <dbReference type="NCBI Taxonomy" id="4100"/>
    <lineage>
        <taxon>Eukaryota</taxon>
        <taxon>Viridiplantae</taxon>
        <taxon>Streptophyta</taxon>
        <taxon>Embryophyta</taxon>
        <taxon>Tracheophyta</taxon>
        <taxon>Spermatophyta</taxon>
        <taxon>Magnoliopsida</taxon>
        <taxon>eudicotyledons</taxon>
        <taxon>Gunneridae</taxon>
        <taxon>Pentapetalae</taxon>
        <taxon>asterids</taxon>
        <taxon>lamiids</taxon>
        <taxon>Solanales</taxon>
        <taxon>Solanaceae</taxon>
        <taxon>Nicotianoideae</taxon>
        <taxon>Nicotianeae</taxon>
        <taxon>Nicotiana</taxon>
    </lineage>
</organism>
<name>CITX1_NICBE</name>
<comment type="function">
    <text evidence="2">Probable thiol-disulfide oxidoreductase that may play a role in proper chloroplast development.</text>
</comment>
<comment type="subcellular location">
    <subcellularLocation>
        <location evidence="3">Plastid</location>
        <location evidence="3">Chloroplast</location>
    </subcellularLocation>
</comment>
<comment type="similarity">
    <text evidence="7">Belongs to the thioredoxin family. Plant CITRX-type subfamily.</text>
</comment>
<comment type="caution">
    <text evidence="8">The article has been retracted, because it has become clear that the thioredoxin that interacts in yeast 2-hybrid with the Cf-9 C-terminus is in fact localized in the chloroplast, rendering a role in Cf-9 signaling unlikely. All the authors agree that this paper should be withdrawn from the scientific literature.</text>
</comment>
<feature type="transit peptide" description="Chloroplast" evidence="3">
    <location>
        <begin position="1"/>
        <end position="70"/>
    </location>
</feature>
<feature type="chain" id="PRO_0000430871" description="Thioredoxin-like protein CITRX1, chloroplastic">
    <location>
        <begin position="71"/>
        <end position="181"/>
    </location>
</feature>
<feature type="domain" description="Thioredoxin" evidence="4">
    <location>
        <begin position="71"/>
        <end position="181"/>
    </location>
</feature>
<feature type="region of interest" description="Disordered" evidence="5">
    <location>
        <begin position="1"/>
        <end position="20"/>
    </location>
</feature>
<feature type="active site" description="Nucleophile" evidence="1">
    <location>
        <position position="104"/>
    </location>
</feature>
<feature type="active site" description="Nucleophile" evidence="1">
    <location>
        <position position="107"/>
    </location>
</feature>
<feature type="site" description="Deprotonates C-terminal active site Cys" evidence="1">
    <location>
        <position position="98"/>
    </location>
</feature>
<feature type="site" description="Contributes to redox potential value" evidence="1">
    <location>
        <position position="105"/>
    </location>
</feature>
<feature type="site" description="Contributes to redox potential value" evidence="1">
    <location>
        <position position="106"/>
    </location>
</feature>
<feature type="disulfide bond" description="Redox-active" evidence="4">
    <location>
        <begin position="104"/>
        <end position="107"/>
    </location>
</feature>
<dbReference type="EC" id="1.8.-.-" evidence="7"/>
<dbReference type="EMBL" id="AY500242">
    <property type="protein sequence ID" value="AAS80319.1"/>
    <property type="molecule type" value="mRNA"/>
</dbReference>
<dbReference type="SMR" id="Q6JE38"/>
<dbReference type="GO" id="GO:0009507">
    <property type="term" value="C:chloroplast"/>
    <property type="evidence" value="ECO:0007669"/>
    <property type="project" value="UniProtKB-SubCell"/>
</dbReference>
<dbReference type="GO" id="GO:0009579">
    <property type="term" value="C:thylakoid"/>
    <property type="evidence" value="ECO:0007669"/>
    <property type="project" value="TreeGrafter"/>
</dbReference>
<dbReference type="GO" id="GO:0015035">
    <property type="term" value="F:protein-disulfide reductase activity"/>
    <property type="evidence" value="ECO:0007669"/>
    <property type="project" value="InterPro"/>
</dbReference>
<dbReference type="GO" id="GO:0045454">
    <property type="term" value="P:cell redox homeostasis"/>
    <property type="evidence" value="ECO:0007669"/>
    <property type="project" value="InterPro"/>
</dbReference>
<dbReference type="GO" id="GO:0009657">
    <property type="term" value="P:plastid organization"/>
    <property type="evidence" value="ECO:0007669"/>
    <property type="project" value="TreeGrafter"/>
</dbReference>
<dbReference type="CDD" id="cd02947">
    <property type="entry name" value="TRX_family"/>
    <property type="match status" value="1"/>
</dbReference>
<dbReference type="FunFam" id="3.40.30.10:FF:000149">
    <property type="entry name" value="Thioredoxin-like protein CITRX, chloroplastic"/>
    <property type="match status" value="1"/>
</dbReference>
<dbReference type="Gene3D" id="3.40.30.10">
    <property type="entry name" value="Glutaredoxin"/>
    <property type="match status" value="1"/>
</dbReference>
<dbReference type="InterPro" id="IPR044182">
    <property type="entry name" value="CITRX"/>
</dbReference>
<dbReference type="InterPro" id="IPR036249">
    <property type="entry name" value="Thioredoxin-like_sf"/>
</dbReference>
<dbReference type="InterPro" id="IPR013766">
    <property type="entry name" value="Thioredoxin_domain"/>
</dbReference>
<dbReference type="PANTHER" id="PTHR47834">
    <property type="entry name" value="THIOREDOXIN-LIKE PROTEIN CITRX, CHLOROPLASTIC"/>
    <property type="match status" value="1"/>
</dbReference>
<dbReference type="PANTHER" id="PTHR47834:SF2">
    <property type="entry name" value="THIOREDOXIN-LIKE PROTEIN CITRX, CHLOROPLASTIC"/>
    <property type="match status" value="1"/>
</dbReference>
<dbReference type="Pfam" id="PF00085">
    <property type="entry name" value="Thioredoxin"/>
    <property type="match status" value="1"/>
</dbReference>
<dbReference type="PRINTS" id="PR00421">
    <property type="entry name" value="THIOREDOXIN"/>
</dbReference>
<dbReference type="SUPFAM" id="SSF52833">
    <property type="entry name" value="Thioredoxin-like"/>
    <property type="match status" value="1"/>
</dbReference>
<dbReference type="PROSITE" id="PS51352">
    <property type="entry name" value="THIOREDOXIN_2"/>
    <property type="match status" value="1"/>
</dbReference>
<reference key="1">
    <citation type="journal article" date="2004" name="EMBO J.">
        <title>CITRX thioredoxin interacts with the tomato Cf-9 resistance protein and negatively regulates defence.</title>
        <authorList>
            <person name="Rivas S."/>
            <person name="Rougon-Cardoso A."/>
            <person name="Smoker M."/>
            <person name="Schauser L."/>
            <person name="Yoshioka H."/>
            <person name="Jones J.D."/>
        </authorList>
    </citation>
    <scope>NUCLEOTIDE SEQUENCE [MRNA]</scope>
    <scope>RETRACTED PAPER</scope>
</reference>
<reference key="2">
    <citation type="journal article" date="2019" name="EMBO J.">
        <authorList>
            <person name="Rivas S."/>
            <person name="Rougon-Cardoso A."/>
            <person name="Smoker M."/>
            <person name="Schauser L."/>
            <person name="Yoshioka H."/>
            <person name="Jones J.D."/>
        </authorList>
    </citation>
    <scope>RETRACTION NOTICE OF PUBMED:15131698</scope>
</reference>
<keyword id="KW-0150">Chloroplast</keyword>
<keyword id="KW-1015">Disulfide bond</keyword>
<keyword id="KW-0249">Electron transport</keyword>
<keyword id="KW-0560">Oxidoreductase</keyword>
<keyword id="KW-0934">Plastid</keyword>
<keyword id="KW-0676">Redox-active center</keyword>
<keyword id="KW-0809">Transit peptide</keyword>
<keyword id="KW-0813">Transport</keyword>